<protein>
    <recommendedName>
        <fullName evidence="1">S-adenosylmethionine decarboxylase proenzyme</fullName>
        <shortName evidence="1">AdoMetDC</shortName>
        <shortName evidence="1">SAMDC</shortName>
        <ecNumber evidence="1">4.1.1.50</ecNumber>
    </recommendedName>
    <component>
        <recommendedName>
            <fullName evidence="1">S-adenosylmethionine decarboxylase beta chain</fullName>
        </recommendedName>
    </component>
    <component>
        <recommendedName>
            <fullName evidence="1">S-adenosylmethionine decarboxylase alpha chain</fullName>
        </recommendedName>
    </component>
</protein>
<reference key="1">
    <citation type="journal article" date="2009" name="J. Bacteriol.">
        <title>Genome sequence of Azotobacter vinelandii, an obligate aerobe specialized to support diverse anaerobic metabolic processes.</title>
        <authorList>
            <person name="Setubal J.C."/>
            <person name="Dos Santos P."/>
            <person name="Goldman B.S."/>
            <person name="Ertesvaag H."/>
            <person name="Espin G."/>
            <person name="Rubio L.M."/>
            <person name="Valla S."/>
            <person name="Almeida N.F."/>
            <person name="Balasubramanian D."/>
            <person name="Cromes L."/>
            <person name="Curatti L."/>
            <person name="Du Z."/>
            <person name="Godsy E."/>
            <person name="Goodner B."/>
            <person name="Hellner-Burris K."/>
            <person name="Hernandez J.A."/>
            <person name="Houmiel K."/>
            <person name="Imperial J."/>
            <person name="Kennedy C."/>
            <person name="Larson T.J."/>
            <person name="Latreille P."/>
            <person name="Ligon L.S."/>
            <person name="Lu J."/>
            <person name="Maerk M."/>
            <person name="Miller N.M."/>
            <person name="Norton S."/>
            <person name="O'Carroll I.P."/>
            <person name="Paulsen I."/>
            <person name="Raulfs E.C."/>
            <person name="Roemer R."/>
            <person name="Rosser J."/>
            <person name="Segura D."/>
            <person name="Slater S."/>
            <person name="Stricklin S.L."/>
            <person name="Studholme D.J."/>
            <person name="Sun J."/>
            <person name="Viana C.J."/>
            <person name="Wallin E."/>
            <person name="Wang B."/>
            <person name="Wheeler C."/>
            <person name="Zhu H."/>
            <person name="Dean D.R."/>
            <person name="Dixon R."/>
            <person name="Wood D."/>
        </authorList>
    </citation>
    <scope>NUCLEOTIDE SEQUENCE [LARGE SCALE GENOMIC DNA]</scope>
    <source>
        <strain>DJ / ATCC BAA-1303</strain>
    </source>
</reference>
<dbReference type="EC" id="4.1.1.50" evidence="1"/>
<dbReference type="EMBL" id="CP001157">
    <property type="protein sequence ID" value="ACO80717.1"/>
    <property type="molecule type" value="Genomic_DNA"/>
</dbReference>
<dbReference type="RefSeq" id="WP_012703080.1">
    <property type="nucleotide sequence ID" value="NC_012560.1"/>
</dbReference>
<dbReference type="STRING" id="322710.Avin_46080"/>
<dbReference type="EnsemblBacteria" id="ACO80717">
    <property type="protein sequence ID" value="ACO80717"/>
    <property type="gene ID" value="Avin_46080"/>
</dbReference>
<dbReference type="GeneID" id="88187492"/>
<dbReference type="KEGG" id="avn:Avin_46080"/>
<dbReference type="eggNOG" id="COG1586">
    <property type="taxonomic scope" value="Bacteria"/>
</dbReference>
<dbReference type="HOGENOM" id="CLU_092007_0_0_6"/>
<dbReference type="OrthoDB" id="5290709at2"/>
<dbReference type="UniPathway" id="UPA00331">
    <property type="reaction ID" value="UER00451"/>
</dbReference>
<dbReference type="Proteomes" id="UP000002424">
    <property type="component" value="Chromosome"/>
</dbReference>
<dbReference type="GO" id="GO:0005829">
    <property type="term" value="C:cytosol"/>
    <property type="evidence" value="ECO:0007669"/>
    <property type="project" value="TreeGrafter"/>
</dbReference>
<dbReference type="GO" id="GO:0004014">
    <property type="term" value="F:adenosylmethionine decarboxylase activity"/>
    <property type="evidence" value="ECO:0007669"/>
    <property type="project" value="UniProtKB-UniRule"/>
</dbReference>
<dbReference type="GO" id="GO:0008295">
    <property type="term" value="P:spermidine biosynthetic process"/>
    <property type="evidence" value="ECO:0007669"/>
    <property type="project" value="UniProtKB-UniRule"/>
</dbReference>
<dbReference type="FunFam" id="3.60.90.10:FF:000001">
    <property type="entry name" value="S-adenosylmethionine decarboxylase proenzyme"/>
    <property type="match status" value="1"/>
</dbReference>
<dbReference type="Gene3D" id="3.60.90.10">
    <property type="entry name" value="S-adenosylmethionine decarboxylase"/>
    <property type="match status" value="1"/>
</dbReference>
<dbReference type="HAMAP" id="MF_00465">
    <property type="entry name" value="AdoMetDC_2"/>
    <property type="match status" value="1"/>
</dbReference>
<dbReference type="InterPro" id="IPR003826">
    <property type="entry name" value="AdoMetDC_fam_prok"/>
</dbReference>
<dbReference type="InterPro" id="IPR009165">
    <property type="entry name" value="S-AdoMet_deCO2ase_bac"/>
</dbReference>
<dbReference type="InterPro" id="IPR016067">
    <property type="entry name" value="S-AdoMet_deCO2ase_core"/>
</dbReference>
<dbReference type="NCBIfam" id="TIGR03331">
    <property type="entry name" value="SAM_DCase_Eco"/>
    <property type="match status" value="1"/>
</dbReference>
<dbReference type="PANTHER" id="PTHR33866">
    <property type="entry name" value="S-ADENOSYLMETHIONINE DECARBOXYLASE PROENZYME"/>
    <property type="match status" value="1"/>
</dbReference>
<dbReference type="PANTHER" id="PTHR33866:SF1">
    <property type="entry name" value="S-ADENOSYLMETHIONINE DECARBOXYLASE PROENZYME"/>
    <property type="match status" value="1"/>
</dbReference>
<dbReference type="Pfam" id="PF02675">
    <property type="entry name" value="AdoMet_dc"/>
    <property type="match status" value="1"/>
</dbReference>
<dbReference type="PIRSF" id="PIRSF001356">
    <property type="entry name" value="SAM_decarboxylas"/>
    <property type="match status" value="1"/>
</dbReference>
<dbReference type="SUPFAM" id="SSF56276">
    <property type="entry name" value="S-adenosylmethionine decarboxylase"/>
    <property type="match status" value="1"/>
</dbReference>
<gene>
    <name evidence="1" type="primary">speD</name>
    <name type="ordered locus">Avin_46080</name>
</gene>
<accession>C1DHY4</accession>
<proteinExistence type="inferred from homology"/>
<sequence>MKSKLKLHGFNNLTKTLSFNIYDICYAETPEDQQAYVRYIDEEYDAQRLTQILTDVVDIIGANVLNIARQDYDPQGASVTILISEQPVEPTESQIEESPGPLPETILAHLDKSHITVHTYPEIHPVDGLATFRVDIDVSTCGVISPLKALNYLIHQFDSDIVTVDYRVRGFTRDVEGRKHFIDHEINSIQKYLSADTRAAYQMTDVNVYQENMFHTKMLLKDFDLDNYLFGDATLNLSVEQRKQVEKRLRHEMLEIFYARNMPH</sequence>
<organism>
    <name type="scientific">Azotobacter vinelandii (strain DJ / ATCC BAA-1303)</name>
    <dbReference type="NCBI Taxonomy" id="322710"/>
    <lineage>
        <taxon>Bacteria</taxon>
        <taxon>Pseudomonadati</taxon>
        <taxon>Pseudomonadota</taxon>
        <taxon>Gammaproteobacteria</taxon>
        <taxon>Pseudomonadales</taxon>
        <taxon>Pseudomonadaceae</taxon>
        <taxon>Azotobacter</taxon>
    </lineage>
</organism>
<comment type="function">
    <text evidence="1">Catalyzes the decarboxylation of S-adenosylmethionine to S-adenosylmethioninamine (dcAdoMet), the propylamine donor required for the synthesis of the polyamines spermine and spermidine from the diamine putrescine.</text>
</comment>
<comment type="catalytic activity">
    <reaction evidence="1">
        <text>S-adenosyl-L-methionine + H(+) = S-adenosyl 3-(methylsulfanyl)propylamine + CO2</text>
        <dbReference type="Rhea" id="RHEA:15981"/>
        <dbReference type="ChEBI" id="CHEBI:15378"/>
        <dbReference type="ChEBI" id="CHEBI:16526"/>
        <dbReference type="ChEBI" id="CHEBI:57443"/>
        <dbReference type="ChEBI" id="CHEBI:59789"/>
        <dbReference type="EC" id="4.1.1.50"/>
    </reaction>
</comment>
<comment type="cofactor">
    <cofactor evidence="1">
        <name>pyruvate</name>
        <dbReference type="ChEBI" id="CHEBI:15361"/>
    </cofactor>
    <text evidence="1">Binds 1 pyruvoyl group covalently per subunit.</text>
</comment>
<comment type="pathway">
    <text evidence="1">Amine and polyamine biosynthesis; S-adenosylmethioninamine biosynthesis; S-adenosylmethioninamine from S-adenosyl-L-methionine: step 1/1.</text>
</comment>
<comment type="subunit">
    <text evidence="1">Heterooctamer of four alpha and four beta chains arranged as a tetramer of alpha/beta heterodimers.</text>
</comment>
<comment type="PTM">
    <text evidence="1">Is synthesized initially as an inactive proenzyme. Formation of the active enzyme involves a self-maturation process in which the active site pyruvoyl group is generated from an internal serine residue via an autocatalytic post-translational modification. Two non-identical subunits are generated from the proenzyme in this reaction, and the pyruvate is formed at the N-terminus of the alpha chain, which is derived from the carboxyl end of the proenzyme. The post-translation cleavage follows an unusual pathway, termed non-hydrolytic serinolysis, in which the side chain hydroxyl group of the serine supplies its oxygen atom to form the C-terminus of the beta chain, while the remainder of the serine residue undergoes an oxidative deamination to produce ammonia and the pyruvoyl group blocking the N-terminus of the alpha chain.</text>
</comment>
<comment type="similarity">
    <text evidence="1">Belongs to the prokaryotic AdoMetDC family. Type 2 subfamily.</text>
</comment>
<evidence type="ECO:0000255" key="1">
    <source>
        <dbReference type="HAMAP-Rule" id="MF_00465"/>
    </source>
</evidence>
<name>SPED_AZOVD</name>
<keyword id="KW-0068">Autocatalytic cleavage</keyword>
<keyword id="KW-0210">Decarboxylase</keyword>
<keyword id="KW-0456">Lyase</keyword>
<keyword id="KW-0620">Polyamine biosynthesis</keyword>
<keyword id="KW-0670">Pyruvate</keyword>
<keyword id="KW-0949">S-adenosyl-L-methionine</keyword>
<keyword id="KW-0704">Schiff base</keyword>
<keyword id="KW-0745">Spermidine biosynthesis</keyword>
<keyword id="KW-0865">Zymogen</keyword>
<feature type="chain" id="PRO_1000206322" description="S-adenosylmethionine decarboxylase beta chain" evidence="1">
    <location>
        <begin position="1"/>
        <end position="112"/>
    </location>
</feature>
<feature type="chain" id="PRO_1000206323" description="S-adenosylmethionine decarboxylase alpha chain" evidence="1">
    <location>
        <begin position="113"/>
        <end position="264"/>
    </location>
</feature>
<feature type="active site" description="Schiff-base intermediate with substrate; via pyruvic acid" evidence="1">
    <location>
        <position position="113"/>
    </location>
</feature>
<feature type="active site" description="Proton acceptor; for processing activity" evidence="1">
    <location>
        <position position="118"/>
    </location>
</feature>
<feature type="active site" description="Proton donor; for catalytic activity" evidence="1">
    <location>
        <position position="141"/>
    </location>
</feature>
<feature type="site" description="Cleavage (non-hydrolytic); by autolysis" evidence="1">
    <location>
        <begin position="112"/>
        <end position="113"/>
    </location>
</feature>
<feature type="modified residue" description="Pyruvic acid (Ser); by autocatalysis" evidence="1">
    <location>
        <position position="113"/>
    </location>
</feature>